<name>CRP1_YEASO</name>
<keyword id="KW-0238">DNA-binding</keyword>
<keyword id="KW-0597">Phosphoprotein</keyword>
<accession>E7NIP0</accession>
<organism>
    <name type="scientific">Saccharomyces cerevisiae (strain FostersO)</name>
    <name type="common">Baker's yeast</name>
    <dbReference type="NCBI Taxonomy" id="764101"/>
    <lineage>
        <taxon>Eukaryota</taxon>
        <taxon>Fungi</taxon>
        <taxon>Dikarya</taxon>
        <taxon>Ascomycota</taxon>
        <taxon>Saccharomycotina</taxon>
        <taxon>Saccharomycetes</taxon>
        <taxon>Saccharomycetales</taxon>
        <taxon>Saccharomycetaceae</taxon>
        <taxon>Saccharomyces</taxon>
    </lineage>
</organism>
<protein>
    <recommendedName>
        <fullName>Cruciform DNA-recognizing protein 1</fullName>
    </recommendedName>
    <component>
        <recommendedName>
            <fullName>CRP1 short N-terminal subpeptide</fullName>
        </recommendedName>
    </component>
    <component>
        <recommendedName>
            <fullName>CRP1 short C-terminal subpeptide</fullName>
        </recommendedName>
    </component>
</protein>
<sequence length="465" mass="51148">MSSELMFNYTFSWPAGPKDVILTGTFDDWRGTLPLVKTAKGNFEITMPVKLANKDDTFQFKFIVDGVWCVSDSYKKEHVSEGIENNFLQITDLVETQEVAGASRIPEAGGLLCGKPPRSAGPPSTSNRKKNKRNNKKRRSKLKKKSTKNNKKSNESLDDNEEEDGVTGTTTEDVTGTSREETPLAEPTNVSKEAPGNFHILPIDQSADTTQSNGIIGGPGPVLVPNPGEIKEFTEIRDVDARELNERLNKKEEVPEPVAGPIVESSVTEKSPALPQADDLIVETKEMAHNVQELTPQVEAVTPLINEPEPLPTPEAQISIPESSKVEPVEGSLQPKLVEKRESTEGVSDGSKKVENKAKKDEEVFTLDPIVNKAPKLPLTDEQTAEGRKSPAVSEEKEKKKKQEKGSKEVKRSETSKEKKPSAKEVKKQTVKAPKKQTASPLSSSTEEPKKKKTGFFGKLKKLFK</sequence>
<evidence type="ECO:0000250" key="1"/>
<evidence type="ECO:0000250" key="2">
    <source>
        <dbReference type="UniProtKB" id="P38845"/>
    </source>
</evidence>
<evidence type="ECO:0000256" key="3">
    <source>
        <dbReference type="SAM" id="MobiDB-lite"/>
    </source>
</evidence>
<evidence type="ECO:0000305" key="4"/>
<comment type="function">
    <text evidence="1">Cruciform DNA-binding protein which exerts an enhancing effect on the cleavage of cruciform DNA (X-DNA) by endonuclease VII from bacteriophage T4.</text>
</comment>
<comment type="PTM">
    <text evidence="1">Cleaved in the vicinity of position 160 to give an X-DNA-binding N-terminal subpeptide and a non-DNA-binding C-terminal subpeptide.</text>
</comment>
<comment type="similarity">
    <text evidence="4">Belongs to the CRP1/MDG1 family.</text>
</comment>
<comment type="sequence caution" evidence="4">
    <conflict type="erroneous initiation">
        <sequence resource="EMBL-CDS" id="EGA62006"/>
    </conflict>
    <text>Truncated N-terminus.</text>
</comment>
<feature type="chain" id="PRO_0000409617" description="Cruciform DNA-recognizing protein 1">
    <location>
        <begin position="1"/>
        <end position="465"/>
    </location>
</feature>
<feature type="chain" id="PRO_0000409618" description="CRP1 short N-terminal subpeptide" evidence="1">
    <location>
        <begin position="1"/>
        <end position="160"/>
    </location>
</feature>
<feature type="chain" id="PRO_0000409619" description="CRP1 short C-terminal subpeptide" evidence="1">
    <location>
        <begin position="161"/>
        <end position="465"/>
    </location>
</feature>
<feature type="region of interest" description="Disordered" evidence="3">
    <location>
        <begin position="107"/>
        <end position="227"/>
    </location>
</feature>
<feature type="region of interest" description="X-DNA-binding" evidence="1">
    <location>
        <begin position="160"/>
        <end position="161"/>
    </location>
</feature>
<feature type="region of interest" description="Disordered" evidence="3">
    <location>
        <begin position="247"/>
        <end position="274"/>
    </location>
</feature>
<feature type="region of interest" description="Disordered" evidence="3">
    <location>
        <begin position="298"/>
        <end position="465"/>
    </location>
</feature>
<feature type="compositionally biased region" description="Basic residues" evidence="3">
    <location>
        <begin position="127"/>
        <end position="151"/>
    </location>
</feature>
<feature type="compositionally biased region" description="Acidic residues" evidence="3">
    <location>
        <begin position="156"/>
        <end position="165"/>
    </location>
</feature>
<feature type="compositionally biased region" description="Low complexity" evidence="3">
    <location>
        <begin position="166"/>
        <end position="177"/>
    </location>
</feature>
<feature type="compositionally biased region" description="Basic and acidic residues" evidence="3">
    <location>
        <begin position="337"/>
        <end position="363"/>
    </location>
</feature>
<feature type="compositionally biased region" description="Basic and acidic residues" evidence="3">
    <location>
        <begin position="385"/>
        <end position="398"/>
    </location>
</feature>
<feature type="compositionally biased region" description="Basic and acidic residues" evidence="3">
    <location>
        <begin position="404"/>
        <end position="428"/>
    </location>
</feature>
<feature type="compositionally biased region" description="Basic residues" evidence="3">
    <location>
        <begin position="451"/>
        <end position="465"/>
    </location>
</feature>
<feature type="modified residue" description="Phosphoserine" evidence="2">
    <location>
        <position position="153"/>
    </location>
</feature>
<feature type="modified residue" description="Phosphoserine" evidence="2">
    <location>
        <position position="156"/>
    </location>
</feature>
<feature type="modified residue" description="Phosphothreonine" evidence="2">
    <location>
        <position position="182"/>
    </location>
</feature>
<feature type="modified residue" description="Phosphoserine" evidence="2">
    <location>
        <position position="271"/>
    </location>
</feature>
<feature type="modified residue" description="Phosphothreonine" evidence="2">
    <location>
        <position position="295"/>
    </location>
</feature>
<feature type="modified residue" description="Phosphoserine" evidence="2">
    <location>
        <position position="319"/>
    </location>
</feature>
<feature type="modified residue" description="Phosphoserine" evidence="2">
    <location>
        <position position="343"/>
    </location>
</feature>
<feature type="modified residue" description="Phosphothreonine" evidence="2">
    <location>
        <position position="366"/>
    </location>
</feature>
<feature type="modified residue" description="Phosphoserine" evidence="2">
    <location>
        <position position="394"/>
    </location>
</feature>
<feature type="modified residue" description="Phosphoserine" evidence="2">
    <location>
        <position position="440"/>
    </location>
</feature>
<gene>
    <name type="primary">CRP1</name>
    <name type="ORF">FOSTERSO_2164</name>
</gene>
<reference key="1">
    <citation type="journal article" date="2011" name="PLoS Genet.">
        <title>Whole-genome comparison reveals novel genetic elements that characterize the genome of industrial strains of Saccharomyces cerevisiae.</title>
        <authorList>
            <person name="Borneman A.R."/>
            <person name="Desany B.A."/>
            <person name="Riches D."/>
            <person name="Affourtit J.P."/>
            <person name="Forgan A.H."/>
            <person name="Pretorius I.S."/>
            <person name="Egholm M."/>
            <person name="Chambers P.J."/>
        </authorList>
    </citation>
    <scope>NUCLEOTIDE SEQUENCE [LARGE SCALE GENOMIC DNA]</scope>
    <source>
        <strain>FostersO</strain>
    </source>
</reference>
<proteinExistence type="inferred from homology"/>
<dbReference type="EMBL" id="AEEZ01000050">
    <property type="protein sequence ID" value="EGA62006.1"/>
    <property type="status" value="ALT_INIT"/>
    <property type="molecule type" value="Genomic_DNA"/>
</dbReference>
<dbReference type="SMR" id="E7NIP0"/>
<dbReference type="HOGENOM" id="CLU_594765_0_0_1"/>
<dbReference type="OrthoDB" id="40992at4893"/>
<dbReference type="GO" id="GO:0005737">
    <property type="term" value="C:cytoplasm"/>
    <property type="evidence" value="ECO:0007669"/>
    <property type="project" value="TreeGrafter"/>
</dbReference>
<dbReference type="GO" id="GO:0031588">
    <property type="term" value="C:nucleotide-activated protein kinase complex"/>
    <property type="evidence" value="ECO:0007669"/>
    <property type="project" value="TreeGrafter"/>
</dbReference>
<dbReference type="GO" id="GO:0005634">
    <property type="term" value="C:nucleus"/>
    <property type="evidence" value="ECO:0007669"/>
    <property type="project" value="TreeGrafter"/>
</dbReference>
<dbReference type="GO" id="GO:0003677">
    <property type="term" value="F:DNA binding"/>
    <property type="evidence" value="ECO:0007669"/>
    <property type="project" value="UniProtKB-KW"/>
</dbReference>
<dbReference type="GO" id="GO:0019901">
    <property type="term" value="F:protein kinase binding"/>
    <property type="evidence" value="ECO:0007669"/>
    <property type="project" value="TreeGrafter"/>
</dbReference>
<dbReference type="GO" id="GO:0007165">
    <property type="term" value="P:signal transduction"/>
    <property type="evidence" value="ECO:0007669"/>
    <property type="project" value="TreeGrafter"/>
</dbReference>
<dbReference type="CDD" id="cd02859">
    <property type="entry name" value="E_set_AMPKbeta_like_N"/>
    <property type="match status" value="1"/>
</dbReference>
<dbReference type="FunFam" id="2.60.40.10:FF:001765">
    <property type="entry name" value="Cruciform DNA-recognizing protein 1"/>
    <property type="match status" value="1"/>
</dbReference>
<dbReference type="Gene3D" id="2.60.40.10">
    <property type="entry name" value="Immunoglobulins"/>
    <property type="match status" value="1"/>
</dbReference>
<dbReference type="InterPro" id="IPR032640">
    <property type="entry name" value="AMPK1_CBM"/>
</dbReference>
<dbReference type="InterPro" id="IPR050827">
    <property type="entry name" value="CRP1_MDG1_kinase"/>
</dbReference>
<dbReference type="InterPro" id="IPR013783">
    <property type="entry name" value="Ig-like_fold"/>
</dbReference>
<dbReference type="InterPro" id="IPR014756">
    <property type="entry name" value="Ig_E-set"/>
</dbReference>
<dbReference type="PANTHER" id="PTHR10343">
    <property type="entry name" value="5'-AMP-ACTIVATED PROTEIN KINASE , BETA SUBUNIT"/>
    <property type="match status" value="1"/>
</dbReference>
<dbReference type="PANTHER" id="PTHR10343:SF81">
    <property type="entry name" value="CRUCIFORM DNA-RECOGNIZING PROTEIN 1-RELATED"/>
    <property type="match status" value="1"/>
</dbReference>
<dbReference type="Pfam" id="PF16561">
    <property type="entry name" value="AMPK1_CBM"/>
    <property type="match status" value="1"/>
</dbReference>
<dbReference type="SUPFAM" id="SSF81296">
    <property type="entry name" value="E set domains"/>
    <property type="match status" value="1"/>
</dbReference>